<sequence length="290" mass="29900">METDLAEMPEKGVLSSQDSPHFQEKSTEEGEVAALRLTARSQAAAAAAAPGSRSLRGVHVPPPLHPAPAREESARTPAAAGRAAKMAEAPASPAPLSPLEVELDPEFEPQSRPRSCTWPLQRPELQASPAKPSGETAADSMIPEEEDDEDDEDGGGRAGSAMAIGGGGGSRTLVSGLLLEDSVRVLAPGGQDPGSGPATAAGGLSGGTQALLQPQQPLPPPQPGAAGGSGQPRKCSSRRNAWGNLSYADLITRAIESSPDRRLTLSQIYEWMVSCVPYFKDKGNSNSSAG</sequence>
<comment type="function">
    <text evidence="1">Transcription factor.</text>
</comment>
<comment type="subcellular location">
    <subcellularLocation>
        <location evidence="4">Cytoplasm</location>
        <location evidence="4">Cytosol</location>
    </subcellularLocation>
    <text evidence="4">Does not translocate to the nucleus upon phosphorylation.</text>
</comment>
<proteinExistence type="evidence at protein level"/>
<protein>
    <recommendedName>
        <fullName evidence="5">Forkhead box protein O3B</fullName>
    </recommendedName>
</protein>
<reference key="1">
    <citation type="journal article" date="2018" name="Gene">
        <title>A splice junction-targeted CRISPR approach (spJCRISPR) reveals human FOXO3B to be a protein-coding gene.</title>
        <authorList>
            <person name="Santo E.E."/>
            <person name="Paik J."/>
        </authorList>
    </citation>
    <scope>NUCLEOTIDE SEQUENCE [MRNA]</scope>
    <scope>SUBCELLULAR LOCATION</scope>
    <scope>PHOSPHORYLATION AT THR-117</scope>
</reference>
<reference key="2">
    <citation type="journal article" date="2006" name="Nature">
        <title>DNA sequence of human chromosome 17 and analysis of rearrangement in the human lineage.</title>
        <authorList>
            <person name="Zody M.C."/>
            <person name="Garber M."/>
            <person name="Adams D.J."/>
            <person name="Sharpe T."/>
            <person name="Harrow J."/>
            <person name="Lupski J.R."/>
            <person name="Nicholson C."/>
            <person name="Searle S.M."/>
            <person name="Wilming L."/>
            <person name="Young S.K."/>
            <person name="Abouelleil A."/>
            <person name="Allen N.R."/>
            <person name="Bi W."/>
            <person name="Bloom T."/>
            <person name="Borowsky M.L."/>
            <person name="Bugalter B.E."/>
            <person name="Butler J."/>
            <person name="Chang J.L."/>
            <person name="Chen C.-K."/>
            <person name="Cook A."/>
            <person name="Corum B."/>
            <person name="Cuomo C.A."/>
            <person name="de Jong P.J."/>
            <person name="DeCaprio D."/>
            <person name="Dewar K."/>
            <person name="FitzGerald M."/>
            <person name="Gilbert J."/>
            <person name="Gibson R."/>
            <person name="Gnerre S."/>
            <person name="Goldstein S."/>
            <person name="Grafham D.V."/>
            <person name="Grocock R."/>
            <person name="Hafez N."/>
            <person name="Hagopian D.S."/>
            <person name="Hart E."/>
            <person name="Norman C.H."/>
            <person name="Humphray S."/>
            <person name="Jaffe D.B."/>
            <person name="Jones M."/>
            <person name="Kamal M."/>
            <person name="Khodiyar V.K."/>
            <person name="LaButti K."/>
            <person name="Laird G."/>
            <person name="Lehoczky J."/>
            <person name="Liu X."/>
            <person name="Lokyitsang T."/>
            <person name="Loveland J."/>
            <person name="Lui A."/>
            <person name="Macdonald P."/>
            <person name="Major J.E."/>
            <person name="Matthews L."/>
            <person name="Mauceli E."/>
            <person name="McCarroll S.A."/>
            <person name="Mihalev A.H."/>
            <person name="Mudge J."/>
            <person name="Nguyen C."/>
            <person name="Nicol R."/>
            <person name="O'Leary S.B."/>
            <person name="Osoegawa K."/>
            <person name="Schwartz D.C."/>
            <person name="Shaw-Smith C."/>
            <person name="Stankiewicz P."/>
            <person name="Steward C."/>
            <person name="Swarbreck D."/>
            <person name="Venkataraman V."/>
            <person name="Whittaker C.A."/>
            <person name="Yang X."/>
            <person name="Zimmer A.R."/>
            <person name="Bradley A."/>
            <person name="Hubbard T."/>
            <person name="Birren B.W."/>
            <person name="Rogers J."/>
            <person name="Lander E.S."/>
            <person name="Nusbaum C."/>
        </authorList>
    </citation>
    <scope>NUCLEOTIDE SEQUENCE [LARGE SCALE GENOMIC DNA]</scope>
</reference>
<evidence type="ECO:0000250" key="1">
    <source>
        <dbReference type="UniProtKB" id="Q9R1E0"/>
    </source>
</evidence>
<evidence type="ECO:0000255" key="2">
    <source>
        <dbReference type="PROSITE-ProRule" id="PRU00089"/>
    </source>
</evidence>
<evidence type="ECO:0000256" key="3">
    <source>
        <dbReference type="SAM" id="MobiDB-lite"/>
    </source>
</evidence>
<evidence type="ECO:0000269" key="4">
    <source>
    </source>
</evidence>
<evidence type="ECO:0000305" key="5"/>
<evidence type="ECO:0000312" key="6">
    <source>
        <dbReference type="HGNC" id="HGNC:3822"/>
    </source>
</evidence>
<feature type="chain" id="PRO_0000447437" description="Forkhead box protein O3B">
    <location>
        <begin position="1"/>
        <end position="290"/>
    </location>
</feature>
<feature type="DNA-binding region" description="Fork-head" evidence="2">
    <location>
        <begin position="242"/>
        <end position="290"/>
    </location>
</feature>
<feature type="region of interest" description="Disordered" evidence="3">
    <location>
        <begin position="1"/>
        <end position="30"/>
    </location>
</feature>
<feature type="region of interest" description="Disordered" evidence="3">
    <location>
        <begin position="44"/>
        <end position="239"/>
    </location>
</feature>
<feature type="compositionally biased region" description="Low complexity" evidence="3">
    <location>
        <begin position="44"/>
        <end position="59"/>
    </location>
</feature>
<feature type="compositionally biased region" description="Low complexity" evidence="3">
    <location>
        <begin position="75"/>
        <end position="91"/>
    </location>
</feature>
<feature type="compositionally biased region" description="Acidic residues" evidence="3">
    <location>
        <begin position="142"/>
        <end position="153"/>
    </location>
</feature>
<feature type="modified residue" description="Phosphothreonine; by PKB/AKT1" evidence="4">
    <location>
        <position position="117"/>
    </location>
</feature>
<accession>A0A2Z4LIS9</accession>
<dbReference type="EMBL" id="AC026271">
    <property type="status" value="NOT_ANNOTATED_CDS"/>
    <property type="molecule type" value="Genomic_DNA"/>
</dbReference>
<dbReference type="EMBL" id="MG753997">
    <property type="protein sequence ID" value="AWX41297.1"/>
    <property type="molecule type" value="mRNA"/>
</dbReference>
<dbReference type="CCDS" id="CCDS92269.1"/>
<dbReference type="RefSeq" id="NP_001355063.1">
    <property type="nucleotide sequence ID" value="NM_001368134.1"/>
</dbReference>
<dbReference type="RefSeq" id="NP_001355064.1">
    <property type="nucleotide sequence ID" value="NM_001368135.1"/>
</dbReference>
<dbReference type="SMR" id="A0A2Z4LIS9"/>
<dbReference type="FunCoup" id="A0A2Z4LIS9">
    <property type="interactions" value="9"/>
</dbReference>
<dbReference type="STRING" id="9606.ENSP00000499455"/>
<dbReference type="iPTMnet" id="A0A2Z4LIS9"/>
<dbReference type="jPOST" id="A0A2Z4LIS9"/>
<dbReference type="MassIVE" id="A0A2Z4LIS9"/>
<dbReference type="Pumba" id="A0A2Z4LIS9"/>
<dbReference type="Ensembl" id="ENST00000395675.7">
    <property type="protein sequence ID" value="ENSP00000499455.1"/>
    <property type="gene ID" value="ENSG00000240445.6"/>
</dbReference>
<dbReference type="GeneID" id="2310"/>
<dbReference type="MANE-Select" id="ENST00000395675.7">
    <property type="protein sequence ID" value="ENSP00000499455.1"/>
    <property type="RefSeq nucleotide sequence ID" value="NM_001368135.1"/>
    <property type="RefSeq protein sequence ID" value="NP_001355064.1"/>
</dbReference>
<dbReference type="AGR" id="HGNC:3822"/>
<dbReference type="GeneCards" id="FOXO3B"/>
<dbReference type="HGNC" id="HGNC:3822">
    <property type="gene designation" value="FOXO3B"/>
</dbReference>
<dbReference type="HPA" id="ENSG00000240445">
    <property type="expression patterns" value="Low tissue specificity"/>
</dbReference>
<dbReference type="MIM" id="620471">
    <property type="type" value="gene"/>
</dbReference>
<dbReference type="neXtProt" id="NX_A0A2Z4LIS9"/>
<dbReference type="OpenTargets" id="ENSG00000240445"/>
<dbReference type="VEuPathDB" id="HostDB:ENSG00000240445"/>
<dbReference type="InParanoid" id="A0A2Z4LIS9"/>
<dbReference type="OMA" id="PAQCETR"/>
<dbReference type="OrthoDB" id="5954824at2759"/>
<dbReference type="PRO" id="PR:A0A2Z4LIS9"/>
<dbReference type="Proteomes" id="UP000005640">
    <property type="component" value="Chromosome 17"/>
</dbReference>
<dbReference type="Bgee" id="ENSG00000240445">
    <property type="expression patterns" value="Expressed in ganglionic eminence and 111 other cell types or tissues"/>
</dbReference>
<dbReference type="ExpressionAtlas" id="A0A2Z4LIS9">
    <property type="expression patterns" value="baseline and differential"/>
</dbReference>
<dbReference type="GO" id="GO:0005829">
    <property type="term" value="C:cytosol"/>
    <property type="evidence" value="ECO:0007669"/>
    <property type="project" value="UniProtKB-SubCell"/>
</dbReference>
<dbReference type="GO" id="GO:0005634">
    <property type="term" value="C:nucleus"/>
    <property type="evidence" value="ECO:0000318"/>
    <property type="project" value="GO_Central"/>
</dbReference>
<dbReference type="GO" id="GO:0000981">
    <property type="term" value="F:DNA-binding transcription factor activity, RNA polymerase II-specific"/>
    <property type="evidence" value="ECO:0000318"/>
    <property type="project" value="GO_Central"/>
</dbReference>
<dbReference type="GO" id="GO:0000978">
    <property type="term" value="F:RNA polymerase II cis-regulatory region sequence-specific DNA binding"/>
    <property type="evidence" value="ECO:0000318"/>
    <property type="project" value="GO_Central"/>
</dbReference>
<dbReference type="GO" id="GO:0006357">
    <property type="term" value="P:regulation of transcription by RNA polymerase II"/>
    <property type="evidence" value="ECO:0000318"/>
    <property type="project" value="GO_Central"/>
</dbReference>
<dbReference type="Gene3D" id="1.10.10.10">
    <property type="entry name" value="Winged helix-like DNA-binding domain superfamily/Winged helix DNA-binding domain"/>
    <property type="match status" value="1"/>
</dbReference>
<dbReference type="InterPro" id="IPR001766">
    <property type="entry name" value="Fork_head_dom"/>
</dbReference>
<dbReference type="InterPro" id="IPR036388">
    <property type="entry name" value="WH-like_DNA-bd_sf"/>
</dbReference>
<dbReference type="InterPro" id="IPR036390">
    <property type="entry name" value="WH_DNA-bd_sf"/>
</dbReference>
<dbReference type="PANTHER" id="PTHR45767">
    <property type="entry name" value="FORKHEAD BOX PROTEIN O"/>
    <property type="match status" value="1"/>
</dbReference>
<dbReference type="PANTHER" id="PTHR45767:SF4">
    <property type="entry name" value="FORKHEAD BOX PROTEIN O3-RELATED"/>
    <property type="match status" value="1"/>
</dbReference>
<dbReference type="Pfam" id="PF00250">
    <property type="entry name" value="Forkhead"/>
    <property type="match status" value="1"/>
</dbReference>
<dbReference type="SMART" id="SM00339">
    <property type="entry name" value="FH"/>
    <property type="match status" value="1"/>
</dbReference>
<dbReference type="SUPFAM" id="SSF46785">
    <property type="entry name" value="Winged helix' DNA-binding domain"/>
    <property type="match status" value="1"/>
</dbReference>
<dbReference type="PROSITE" id="PS50039">
    <property type="entry name" value="FORK_HEAD_3"/>
    <property type="match status" value="1"/>
</dbReference>
<keyword id="KW-0963">Cytoplasm</keyword>
<keyword id="KW-0238">DNA-binding</keyword>
<keyword id="KW-0597">Phosphoprotein</keyword>
<keyword id="KW-1267">Proteomics identification</keyword>
<keyword id="KW-1185">Reference proteome</keyword>
<keyword id="KW-0804">Transcription</keyword>
<keyword id="KW-0805">Transcription regulation</keyword>
<name>FXO3B_HUMAN</name>
<gene>
    <name evidence="6" type="primary">FOXO3B</name>
</gene>
<organism>
    <name type="scientific">Homo sapiens</name>
    <name type="common">Human</name>
    <dbReference type="NCBI Taxonomy" id="9606"/>
    <lineage>
        <taxon>Eukaryota</taxon>
        <taxon>Metazoa</taxon>
        <taxon>Chordata</taxon>
        <taxon>Craniata</taxon>
        <taxon>Vertebrata</taxon>
        <taxon>Euteleostomi</taxon>
        <taxon>Mammalia</taxon>
        <taxon>Eutheria</taxon>
        <taxon>Euarchontoglires</taxon>
        <taxon>Primates</taxon>
        <taxon>Haplorrhini</taxon>
        <taxon>Catarrhini</taxon>
        <taxon>Hominidae</taxon>
        <taxon>Homo</taxon>
    </lineage>
</organism>